<protein>
    <recommendedName>
        <fullName evidence="6">Bifunctional terpene synthase Agr4</fullName>
        <ecNumber evidence="5">4.2.3.-</ecNumber>
        <ecNumber evidence="5">4.2.3.126</ecNumber>
        <ecNumber evidence="5">4.2.3.127</ecNumber>
        <ecNumber evidence="5">4.2.3.15</ecNumber>
    </recommendedName>
    <alternativeName>
        <fullName evidence="6">Terpene cyclase Agr4</fullName>
    </alternativeName>
</protein>
<accession>A0A5Q0QP64</accession>
<dbReference type="EC" id="4.2.3.-" evidence="5"/>
<dbReference type="EC" id="4.2.3.126" evidence="5"/>
<dbReference type="EC" id="4.2.3.127" evidence="5"/>
<dbReference type="EC" id="4.2.3.15" evidence="5"/>
<dbReference type="EMBL" id="MN146027">
    <property type="protein sequence ID" value="QGA30880.1"/>
    <property type="molecule type" value="Genomic_DNA"/>
</dbReference>
<dbReference type="SMR" id="A0A5Q0QP64"/>
<dbReference type="OrthoDB" id="2861623at2759"/>
<dbReference type="GO" id="GO:0046872">
    <property type="term" value="F:metal ion binding"/>
    <property type="evidence" value="ECO:0007669"/>
    <property type="project" value="UniProtKB-KW"/>
</dbReference>
<dbReference type="GO" id="GO:0050551">
    <property type="term" value="F:myrcene synthase activity"/>
    <property type="evidence" value="ECO:0007669"/>
    <property type="project" value="UniProtKB-EC"/>
</dbReference>
<dbReference type="GO" id="GO:0008299">
    <property type="term" value="P:isoprenoid biosynthetic process"/>
    <property type="evidence" value="ECO:0007669"/>
    <property type="project" value="UniProtKB-ARBA"/>
</dbReference>
<dbReference type="Gene3D" id="1.10.600.10">
    <property type="entry name" value="Farnesyl Diphosphate Synthase"/>
    <property type="match status" value="1"/>
</dbReference>
<dbReference type="InterPro" id="IPR008949">
    <property type="entry name" value="Isoprenoid_synthase_dom_sf"/>
</dbReference>
<dbReference type="InterPro" id="IPR034686">
    <property type="entry name" value="Terpene_cyclase-like_2"/>
</dbReference>
<dbReference type="PANTHER" id="PTHR35201:SF4">
    <property type="entry name" value="BETA-PINACENE SYNTHASE-RELATED"/>
    <property type="match status" value="1"/>
</dbReference>
<dbReference type="PANTHER" id="PTHR35201">
    <property type="entry name" value="TERPENE SYNTHASE"/>
    <property type="match status" value="1"/>
</dbReference>
<dbReference type="Pfam" id="PF19086">
    <property type="entry name" value="Terpene_syn_C_2"/>
    <property type="match status" value="1"/>
</dbReference>
<dbReference type="SFLD" id="SFLDS00005">
    <property type="entry name" value="Isoprenoid_Synthase_Type_I"/>
    <property type="match status" value="1"/>
</dbReference>
<dbReference type="SFLD" id="SFLDG01020">
    <property type="entry name" value="Terpene_Cyclase_Like_2"/>
    <property type="match status" value="1"/>
</dbReference>
<dbReference type="SUPFAM" id="SSF48576">
    <property type="entry name" value="Terpenoid synthases"/>
    <property type="match status" value="1"/>
</dbReference>
<evidence type="ECO:0000250" key="1">
    <source>
        <dbReference type="UniProtKB" id="B5HDJ6"/>
    </source>
</evidence>
<evidence type="ECO:0000250" key="2">
    <source>
        <dbReference type="UniProtKB" id="P0DL13"/>
    </source>
</evidence>
<evidence type="ECO:0000250" key="3">
    <source>
        <dbReference type="UniProtKB" id="Q9UR08"/>
    </source>
</evidence>
<evidence type="ECO:0000269" key="4">
    <source>
    </source>
</evidence>
<evidence type="ECO:0000269" key="5">
    <source>
    </source>
</evidence>
<evidence type="ECO:0000303" key="6">
    <source>
    </source>
</evidence>
<evidence type="ECO:0000305" key="7"/>
<proteinExistence type="evidence at protein level"/>
<name>AGR4_CYCAE</name>
<comment type="function">
    <text evidence="5">Terpene cyclase that catalyzes the cyclization of farnesyl diphosphate (FPP) to various sesquiterpenes, including beta-copaene, alpha-cubebene, cadina-1(6),4-diene, gamma-muurolene, delta-cadinene, epizonarene, epicubenol and cubenol (PubMed:32233445). Agr4 is also able to use the monoterpene precursor geranyl diphosphate (GPP) as substrates to synthesize the monoterpene beta-myrcene (PubMed:32233445). Delta-cadinene is the major product of Agr4 (PubMed:32233445).</text>
</comment>
<comment type="catalytic activity">
    <reaction evidence="5">
        <text>(2E,6E)-farnesyl diphosphate = delta-cadinene + diphosphate</text>
        <dbReference type="Rhea" id="RHEA:56556"/>
        <dbReference type="ChEBI" id="CHEBI:33019"/>
        <dbReference type="ChEBI" id="CHEBI:140564"/>
        <dbReference type="ChEBI" id="CHEBI:175763"/>
    </reaction>
    <physiologicalReaction direction="left-to-right" evidence="4">
        <dbReference type="Rhea" id="RHEA:56557"/>
    </physiologicalReaction>
</comment>
<comment type="catalytic activity">
    <reaction evidence="5">
        <text>(2E,6E)-farnesyl diphosphate = gamma-muurolene + diphosphate</text>
        <dbReference type="Rhea" id="RHEA:33107"/>
        <dbReference type="ChEBI" id="CHEBI:33019"/>
        <dbReference type="ChEBI" id="CHEBI:64798"/>
        <dbReference type="ChEBI" id="CHEBI:175763"/>
        <dbReference type="EC" id="4.2.3.126"/>
    </reaction>
    <physiologicalReaction direction="left-to-right" evidence="5">
        <dbReference type="Rhea" id="RHEA:33108"/>
    </physiologicalReaction>
</comment>
<comment type="catalytic activity">
    <reaction evidence="5">
        <text>(2E,6E)-farnesyl diphosphate = beta-copaene + diphosphate</text>
        <dbReference type="Rhea" id="RHEA:33111"/>
        <dbReference type="ChEBI" id="CHEBI:33019"/>
        <dbReference type="ChEBI" id="CHEBI:64799"/>
        <dbReference type="ChEBI" id="CHEBI:175763"/>
        <dbReference type="EC" id="4.2.3.127"/>
    </reaction>
    <physiologicalReaction direction="left-to-right" evidence="5">
        <dbReference type="Rhea" id="RHEA:33112"/>
    </physiologicalReaction>
</comment>
<comment type="catalytic activity">
    <reaction evidence="5">
        <text>(2E)-geranyl diphosphate = beta-myrcene + diphosphate</text>
        <dbReference type="Rhea" id="RHEA:16965"/>
        <dbReference type="ChEBI" id="CHEBI:17221"/>
        <dbReference type="ChEBI" id="CHEBI:33019"/>
        <dbReference type="ChEBI" id="CHEBI:58057"/>
        <dbReference type="EC" id="4.2.3.15"/>
    </reaction>
    <physiologicalReaction direction="left-to-right" evidence="5">
        <dbReference type="Rhea" id="RHEA:16966"/>
    </physiologicalReaction>
</comment>
<comment type="cofactor">
    <cofactor evidence="5">
        <name>Mg(2+)</name>
        <dbReference type="ChEBI" id="CHEBI:18420"/>
    </cofactor>
</comment>
<comment type="domain">
    <text evidence="5">The DDXXD motif is important for the catalytic activity, presumably through binding to Mg(2+).</text>
</comment>
<comment type="similarity">
    <text evidence="7">Belongs to the terpene synthase family.</text>
</comment>
<feature type="chain" id="PRO_0000451259" description="Bifunctional terpene synthase Agr4">
    <location>
        <begin position="1"/>
        <end position="342"/>
    </location>
</feature>
<feature type="short sequence motif" description="DDXXD motif" evidence="2">
    <location>
        <begin position="87"/>
        <end position="91"/>
    </location>
</feature>
<feature type="binding site" evidence="3">
    <location>
        <position position="87"/>
    </location>
    <ligand>
        <name>Mg(2+)</name>
        <dbReference type="ChEBI" id="CHEBI:18420"/>
        <label>1</label>
    </ligand>
</feature>
<feature type="binding site" evidence="3">
    <location>
        <position position="87"/>
    </location>
    <ligand>
        <name>Mg(2+)</name>
        <dbReference type="ChEBI" id="CHEBI:18420"/>
        <label>2</label>
    </ligand>
</feature>
<feature type="binding site" evidence="3">
    <location>
        <position position="222"/>
    </location>
    <ligand>
        <name>Mg(2+)</name>
        <dbReference type="ChEBI" id="CHEBI:18420"/>
        <label>3</label>
    </ligand>
</feature>
<feature type="binding site" evidence="3">
    <location>
        <position position="226"/>
    </location>
    <ligand>
        <name>Mg(2+)</name>
        <dbReference type="ChEBI" id="CHEBI:18420"/>
        <label>3</label>
    </ligand>
</feature>
<feature type="binding site" evidence="3">
    <location>
        <position position="230"/>
    </location>
    <ligand>
        <name>Mg(2+)</name>
        <dbReference type="ChEBI" id="CHEBI:18420"/>
        <label>3</label>
    </ligand>
</feature>
<feature type="binding site" evidence="3">
    <location>
        <position position="308"/>
    </location>
    <ligand>
        <name>(2E,6E)-farnesyl diphosphate</name>
        <dbReference type="ChEBI" id="CHEBI:175763"/>
    </ligand>
</feature>
<feature type="binding site" evidence="3">
    <location>
        <position position="309"/>
    </location>
    <ligand>
        <name>(2E,6E)-farnesyl diphosphate</name>
        <dbReference type="ChEBI" id="CHEBI:175763"/>
    </ligand>
</feature>
<feature type="site" description="Plays a critical role in the stabilization of intermediate cation" evidence="1">
    <location>
        <position position="84"/>
    </location>
</feature>
<sequence length="342" mass="38560">MSALPSQFKLPDLLSTCPLKDGTNPAYKKAAAESRAWIGSYNMFADRKRAFFIQGQNELLCSHVYCYAGYEQLRTTCDFVNLLFVVDEVSDEQSGEDARATGQVFVNAMKYADWHDGSKLAKLTKDFRVRFLRLAGPKNVARFVALCESYTACVGKEAELRESGQVLGVKEFIPLRRQNSAVLLCFSLVEYILGIDLDDEVYRDENFLNAYWAACDHVCWANDVYSYDMEQSKGLSNNNIVTVLMEENHTSLQDTSDYIGEKCAEFVQIYLTSKKRLSPSLGPDAALFLESIGSWMVGNLAWSFETSRYFGSRHLEVKETGIVILRPRELPEDGSSSDSDEE</sequence>
<organism>
    <name type="scientific">Cyclocybe aegerita</name>
    <name type="common">Black poplar mushroom</name>
    <name type="synonym">Agrocybe aegerita</name>
    <dbReference type="NCBI Taxonomy" id="1973307"/>
    <lineage>
        <taxon>Eukaryota</taxon>
        <taxon>Fungi</taxon>
        <taxon>Dikarya</taxon>
        <taxon>Basidiomycota</taxon>
        <taxon>Agaricomycotina</taxon>
        <taxon>Agaricomycetes</taxon>
        <taxon>Agaricomycetidae</taxon>
        <taxon>Agaricales</taxon>
        <taxon>Agaricineae</taxon>
        <taxon>Bolbitiaceae</taxon>
        <taxon>Cyclocybe</taxon>
    </lineage>
</organism>
<reference key="1">
    <citation type="journal article" date="2020" name="ACS Chem. Biol.">
        <title>Agrocybe aegerita serves as a gateway for identifying sesquiterpene biosynthetic enzymes in higher fungi.</title>
        <authorList>
            <person name="Zhang C."/>
            <person name="Chen X."/>
            <person name="Orban A."/>
            <person name="Shukal S."/>
            <person name="Birk F."/>
            <person name="Too H.P."/>
            <person name="Ruehl M."/>
        </authorList>
    </citation>
    <scope>NUCLEOTIDE SEQUENCE [GENOMIC DNA]</scope>
    <scope>FUNCTION</scope>
    <scope>DOMAIN</scope>
    <scope>CATALYTIC ACTIVITY</scope>
    <source>
        <strain>AAE3_05024</strain>
    </source>
</reference>
<reference key="2">
    <citation type="journal article" date="2018" name="BMC Genomics">
        <title>The genome sequence of the commercially cultivated mushroom Agrocybe aegerita reveals a conserved repertoire of fruiting-related genes and a versatile suite of biopolymer-degrading enzymes.</title>
        <authorList>
            <person name="Gupta D.K."/>
            <person name="Ruehl M."/>
            <person name="Mishra B."/>
            <person name="Kleofas V."/>
            <person name="Hofrichter M."/>
            <person name="Herzog R."/>
            <person name="Pecyna M.J."/>
            <person name="Sharma R."/>
            <person name="Kellner H."/>
            <person name="Hennicke F."/>
            <person name="Thines M."/>
        </authorList>
    </citation>
    <scope>NUCLEOTIDE SEQUENCE [LARGE SCALE GENOMIC DNA]</scope>
    <source>
        <strain>AAE3_05024</strain>
    </source>
</reference>
<gene>
    <name evidence="6" type="primary">Agr4</name>
</gene>
<keyword id="KW-0456">Lyase</keyword>
<keyword id="KW-0460">Magnesium</keyword>
<keyword id="KW-0479">Metal-binding</keyword>